<gene>
    <name evidence="1" type="primary">groEL2</name>
    <name evidence="1" type="synonym">groL2</name>
    <name type="ordered locus">sync_2282</name>
</gene>
<comment type="function">
    <text evidence="1">Together with its co-chaperonin GroES, plays an essential role in assisting protein folding. The GroEL-GroES system forms a nano-cage that allows encapsulation of the non-native substrate proteins and provides a physical environment optimized to promote and accelerate protein folding.</text>
</comment>
<comment type="catalytic activity">
    <reaction evidence="1">
        <text>ATP + H2O + a folded polypeptide = ADP + phosphate + an unfolded polypeptide.</text>
        <dbReference type="EC" id="5.6.1.7"/>
    </reaction>
</comment>
<comment type="subunit">
    <text evidence="1">Forms a cylinder of 14 subunits composed of two heptameric rings stacked back-to-back. Interacts with the co-chaperonin GroES.</text>
</comment>
<comment type="subcellular location">
    <subcellularLocation>
        <location evidence="1">Cytoplasm</location>
    </subcellularLocation>
</comment>
<comment type="similarity">
    <text evidence="1">Belongs to the chaperonin (HSP60) family.</text>
</comment>
<proteinExistence type="inferred from homology"/>
<name>CH602_SYNS3</name>
<evidence type="ECO:0000255" key="1">
    <source>
        <dbReference type="HAMAP-Rule" id="MF_00600"/>
    </source>
</evidence>
<protein>
    <recommendedName>
        <fullName evidence="1">Chaperonin GroEL 2</fullName>
        <ecNumber evidence="1">5.6.1.7</ecNumber>
    </recommendedName>
    <alternativeName>
        <fullName evidence="1">60 kDa chaperonin 2</fullName>
    </alternativeName>
    <alternativeName>
        <fullName evidence="1">Chaperonin-60 2</fullName>
        <shortName evidence="1">Cpn60 2</shortName>
    </alternativeName>
</protein>
<reference key="1">
    <citation type="journal article" date="2006" name="Proc. Natl. Acad. Sci. U.S.A.">
        <title>Genome sequence of Synechococcus CC9311: insights into adaptation to a coastal environment.</title>
        <authorList>
            <person name="Palenik B."/>
            <person name="Ren Q."/>
            <person name="Dupont C.L."/>
            <person name="Myers G.S."/>
            <person name="Heidelberg J.F."/>
            <person name="Badger J.H."/>
            <person name="Madupu R."/>
            <person name="Nelson W.C."/>
            <person name="Brinkac L.M."/>
            <person name="Dodson R.J."/>
            <person name="Durkin A.S."/>
            <person name="Daugherty S.C."/>
            <person name="Sullivan S.A."/>
            <person name="Khouri H."/>
            <person name="Mohamoud Y."/>
            <person name="Halpin R."/>
            <person name="Paulsen I.T."/>
        </authorList>
    </citation>
    <scope>NUCLEOTIDE SEQUENCE [LARGE SCALE GENOMIC DNA]</scope>
    <source>
        <strain>CC9311</strain>
    </source>
</reference>
<dbReference type="EC" id="5.6.1.7" evidence="1"/>
<dbReference type="EMBL" id="CP000435">
    <property type="protein sequence ID" value="ABI45474.1"/>
    <property type="molecule type" value="Genomic_DNA"/>
</dbReference>
<dbReference type="RefSeq" id="WP_011620191.1">
    <property type="nucleotide sequence ID" value="NC_008319.1"/>
</dbReference>
<dbReference type="SMR" id="Q0I7U3"/>
<dbReference type="STRING" id="64471.sync_2282"/>
<dbReference type="KEGG" id="syg:sync_2282"/>
<dbReference type="eggNOG" id="COG0459">
    <property type="taxonomic scope" value="Bacteria"/>
</dbReference>
<dbReference type="HOGENOM" id="CLU_016503_3_0_3"/>
<dbReference type="OrthoDB" id="9766614at2"/>
<dbReference type="Proteomes" id="UP000001961">
    <property type="component" value="Chromosome"/>
</dbReference>
<dbReference type="GO" id="GO:0005737">
    <property type="term" value="C:cytoplasm"/>
    <property type="evidence" value="ECO:0007669"/>
    <property type="project" value="UniProtKB-SubCell"/>
</dbReference>
<dbReference type="GO" id="GO:0005524">
    <property type="term" value="F:ATP binding"/>
    <property type="evidence" value="ECO:0007669"/>
    <property type="project" value="UniProtKB-UniRule"/>
</dbReference>
<dbReference type="GO" id="GO:0140662">
    <property type="term" value="F:ATP-dependent protein folding chaperone"/>
    <property type="evidence" value="ECO:0007669"/>
    <property type="project" value="InterPro"/>
</dbReference>
<dbReference type="GO" id="GO:0016853">
    <property type="term" value="F:isomerase activity"/>
    <property type="evidence" value="ECO:0007669"/>
    <property type="project" value="UniProtKB-KW"/>
</dbReference>
<dbReference type="GO" id="GO:0051082">
    <property type="term" value="F:unfolded protein binding"/>
    <property type="evidence" value="ECO:0007669"/>
    <property type="project" value="UniProtKB-UniRule"/>
</dbReference>
<dbReference type="GO" id="GO:0042026">
    <property type="term" value="P:protein refolding"/>
    <property type="evidence" value="ECO:0007669"/>
    <property type="project" value="UniProtKB-UniRule"/>
</dbReference>
<dbReference type="CDD" id="cd03344">
    <property type="entry name" value="GroEL"/>
    <property type="match status" value="1"/>
</dbReference>
<dbReference type="FunFam" id="3.50.7.10:FF:000001">
    <property type="entry name" value="60 kDa chaperonin"/>
    <property type="match status" value="1"/>
</dbReference>
<dbReference type="Gene3D" id="3.50.7.10">
    <property type="entry name" value="GroEL"/>
    <property type="match status" value="1"/>
</dbReference>
<dbReference type="Gene3D" id="1.10.560.10">
    <property type="entry name" value="GroEL-like equatorial domain"/>
    <property type="match status" value="1"/>
</dbReference>
<dbReference type="Gene3D" id="3.30.260.10">
    <property type="entry name" value="TCP-1-like chaperonin intermediate domain"/>
    <property type="match status" value="1"/>
</dbReference>
<dbReference type="HAMAP" id="MF_00600">
    <property type="entry name" value="CH60"/>
    <property type="match status" value="1"/>
</dbReference>
<dbReference type="InterPro" id="IPR018370">
    <property type="entry name" value="Chaperonin_Cpn60_CS"/>
</dbReference>
<dbReference type="InterPro" id="IPR001844">
    <property type="entry name" value="Cpn60/GroEL"/>
</dbReference>
<dbReference type="InterPro" id="IPR002423">
    <property type="entry name" value="Cpn60/GroEL/TCP-1"/>
</dbReference>
<dbReference type="InterPro" id="IPR027409">
    <property type="entry name" value="GroEL-like_apical_dom_sf"/>
</dbReference>
<dbReference type="InterPro" id="IPR027413">
    <property type="entry name" value="GROEL-like_equatorial_sf"/>
</dbReference>
<dbReference type="InterPro" id="IPR027410">
    <property type="entry name" value="TCP-1-like_intermed_sf"/>
</dbReference>
<dbReference type="NCBIfam" id="TIGR02348">
    <property type="entry name" value="GroEL"/>
    <property type="match status" value="1"/>
</dbReference>
<dbReference type="NCBIfam" id="NF000592">
    <property type="entry name" value="PRK00013.1"/>
    <property type="match status" value="1"/>
</dbReference>
<dbReference type="NCBIfam" id="NF009487">
    <property type="entry name" value="PRK12849.1"/>
    <property type="match status" value="1"/>
</dbReference>
<dbReference type="NCBIfam" id="NF009488">
    <property type="entry name" value="PRK12850.1"/>
    <property type="match status" value="1"/>
</dbReference>
<dbReference type="NCBIfam" id="NF009489">
    <property type="entry name" value="PRK12851.1"/>
    <property type="match status" value="1"/>
</dbReference>
<dbReference type="PANTHER" id="PTHR45633">
    <property type="entry name" value="60 KDA HEAT SHOCK PROTEIN, MITOCHONDRIAL"/>
    <property type="match status" value="1"/>
</dbReference>
<dbReference type="Pfam" id="PF00118">
    <property type="entry name" value="Cpn60_TCP1"/>
    <property type="match status" value="1"/>
</dbReference>
<dbReference type="PRINTS" id="PR00298">
    <property type="entry name" value="CHAPERONIN60"/>
</dbReference>
<dbReference type="SUPFAM" id="SSF52029">
    <property type="entry name" value="GroEL apical domain-like"/>
    <property type="match status" value="1"/>
</dbReference>
<dbReference type="SUPFAM" id="SSF48592">
    <property type="entry name" value="GroEL equatorial domain-like"/>
    <property type="match status" value="2"/>
</dbReference>
<dbReference type="PROSITE" id="PS00296">
    <property type="entry name" value="CHAPERONINS_CPN60"/>
    <property type="match status" value="1"/>
</dbReference>
<accession>Q0I7U3</accession>
<keyword id="KW-0067">ATP-binding</keyword>
<keyword id="KW-0143">Chaperone</keyword>
<keyword id="KW-0963">Cytoplasm</keyword>
<keyword id="KW-0413">Isomerase</keyword>
<keyword id="KW-0547">Nucleotide-binding</keyword>
<keyword id="KW-1185">Reference proteome</keyword>
<sequence length="543" mass="57317">MAKRIIYNENARRALEKGIDILAEAVAVTLGPKGRNVVLEKKFGAPQIINDGVTIAKEIELEDHIENTGVALIRQAASKTNDAAGDGTTTATVLAHAMVKAGLRNVAAGANAITLKKGIDKASDFLVGKIQENAKPIADSNAIAQVGTISAGNDEEVGKMIADAMDKVGKEGVISLEEGKSMETELEVTEGMRFDKGYISPYFATDTERMEAVLDEPYILLTDKKIGLVQDLVPVLEQIARTGKPLLIIAEDIEKEALATLVVNRLRGVLNVAAVKAPGFGDRRKAMIEDMAVLTNGQLITEDQGLKLENAKLEMLGTARRVTINKDTTTIVAEGNEVAVSTRCEQIKKQMDETDSTYDKEKLQERLAKLAGGVAVVKVGAATETEMKDKKLRLEDAINATKAAVEEGIVPGGGTTLAHMAPALEEWAASNLSGEELIGANIVASALTAPLMRIAENAGVNGAVVAENVKSKSFNEGYNAANGEYVDMLSAGIVDPAKVTRSGLQNAASIAGMVLTTECIVADMPEKKEAAAAGGGMGGDFDY</sequence>
<organism>
    <name type="scientific">Synechococcus sp. (strain CC9311)</name>
    <dbReference type="NCBI Taxonomy" id="64471"/>
    <lineage>
        <taxon>Bacteria</taxon>
        <taxon>Bacillati</taxon>
        <taxon>Cyanobacteriota</taxon>
        <taxon>Cyanophyceae</taxon>
        <taxon>Synechococcales</taxon>
        <taxon>Synechococcaceae</taxon>
        <taxon>Synechococcus</taxon>
    </lineage>
</organism>
<feature type="chain" id="PRO_0000332091" description="Chaperonin GroEL 2">
    <location>
        <begin position="1"/>
        <end position="543"/>
    </location>
</feature>
<feature type="binding site" evidence="1">
    <location>
        <begin position="29"/>
        <end position="32"/>
    </location>
    <ligand>
        <name>ATP</name>
        <dbReference type="ChEBI" id="CHEBI:30616"/>
    </ligand>
</feature>
<feature type="binding site" evidence="1">
    <location>
        <begin position="86"/>
        <end position="90"/>
    </location>
    <ligand>
        <name>ATP</name>
        <dbReference type="ChEBI" id="CHEBI:30616"/>
    </ligand>
</feature>
<feature type="binding site" evidence="1">
    <location>
        <position position="413"/>
    </location>
    <ligand>
        <name>ATP</name>
        <dbReference type="ChEBI" id="CHEBI:30616"/>
    </ligand>
</feature>
<feature type="binding site" evidence="1">
    <location>
        <begin position="479"/>
        <end position="481"/>
    </location>
    <ligand>
        <name>ATP</name>
        <dbReference type="ChEBI" id="CHEBI:30616"/>
    </ligand>
</feature>
<feature type="binding site" evidence="1">
    <location>
        <position position="495"/>
    </location>
    <ligand>
        <name>ATP</name>
        <dbReference type="ChEBI" id="CHEBI:30616"/>
    </ligand>
</feature>